<name>LMCA1_LISMO</name>
<comment type="function">
    <text evidence="3">Catalyzes the hydrolysis of ATP coupled with the transport of calcium. The transport is electrogenic with a probable ATP:Ca(2+):H(+) stoichiometry of 1:1:1. May have an important role in survival of the bacterium when stressed by a combination of a high calcium concentration and alkaline pH.</text>
</comment>
<comment type="catalytic activity">
    <reaction evidence="3">
        <text>Ca(2+)(in) + ATP + H2O = Ca(2+)(out) + ADP + phosphate + H(+)</text>
        <dbReference type="Rhea" id="RHEA:18105"/>
        <dbReference type="ChEBI" id="CHEBI:15377"/>
        <dbReference type="ChEBI" id="CHEBI:15378"/>
        <dbReference type="ChEBI" id="CHEBI:29108"/>
        <dbReference type="ChEBI" id="CHEBI:30616"/>
        <dbReference type="ChEBI" id="CHEBI:43474"/>
        <dbReference type="ChEBI" id="CHEBI:456216"/>
        <dbReference type="EC" id="7.2.2.10"/>
    </reaction>
</comment>
<comment type="activity regulation">
    <text evidence="3 5">Phosphorylation is inhibited by EGTA and vanadate. ATPase activity is stimulated by Sr(2+). Inhibited by very high concentrations of cyclopiazonic acid (CPA).</text>
</comment>
<comment type="biophysicochemical properties">
    <phDependence>
        <text evidence="3">Optimum pH is 9.0.</text>
    </phDependence>
</comment>
<comment type="subcellular location">
    <subcellularLocation>
        <location evidence="3 4">Cell membrane</location>
        <topology evidence="3 4">Multi-pass membrane protein</topology>
    </subcellularLocation>
</comment>
<comment type="similarity">
    <text evidence="6">Belongs to the cation transport ATPase (P-type) (TC 3.A.3) family. Type IIA subfamily.</text>
</comment>
<accession>Q8Y8Q5</accession>
<keyword id="KW-0002">3D-structure</keyword>
<keyword id="KW-0067">ATP-binding</keyword>
<keyword id="KW-0106">Calcium</keyword>
<keyword id="KW-0109">Calcium transport</keyword>
<keyword id="KW-1003">Cell membrane</keyword>
<keyword id="KW-0406">Ion transport</keyword>
<keyword id="KW-0472">Membrane</keyword>
<keyword id="KW-0479">Metal-binding</keyword>
<keyword id="KW-0547">Nucleotide-binding</keyword>
<keyword id="KW-0597">Phosphoprotein</keyword>
<keyword id="KW-1185">Reference proteome</keyword>
<keyword id="KW-1278">Translocase</keyword>
<keyword id="KW-0812">Transmembrane</keyword>
<keyword id="KW-1133">Transmembrane helix</keyword>
<keyword id="KW-0813">Transport</keyword>
<evidence type="ECO:0000250" key="1"/>
<evidence type="ECO:0000255" key="2"/>
<evidence type="ECO:0000269" key="3">
    <source>
    </source>
</evidence>
<evidence type="ECO:0000269" key="4">
    <source>
    </source>
</evidence>
<evidence type="ECO:0000269" key="5">
    <source>
    </source>
</evidence>
<evidence type="ECO:0000305" key="6"/>
<evidence type="ECO:0007829" key="7">
    <source>
        <dbReference type="PDB" id="6ZHH"/>
    </source>
</evidence>
<organism>
    <name type="scientific">Listeria monocytogenes serovar 1/2a (strain ATCC BAA-679 / EGD-e)</name>
    <dbReference type="NCBI Taxonomy" id="169963"/>
    <lineage>
        <taxon>Bacteria</taxon>
        <taxon>Bacillati</taxon>
        <taxon>Bacillota</taxon>
        <taxon>Bacilli</taxon>
        <taxon>Bacillales</taxon>
        <taxon>Listeriaceae</taxon>
        <taxon>Listeria</taxon>
    </lineage>
</organism>
<dbReference type="EC" id="7.2.2.10"/>
<dbReference type="EMBL" id="AL591976">
    <property type="protein sequence ID" value="CAC98919.1"/>
    <property type="molecule type" value="Genomic_DNA"/>
</dbReference>
<dbReference type="PIR" id="AI1179">
    <property type="entry name" value="AI1179"/>
</dbReference>
<dbReference type="RefSeq" id="NP_464367.1">
    <property type="nucleotide sequence ID" value="NC_003210.1"/>
</dbReference>
<dbReference type="RefSeq" id="WP_003721406.1">
    <property type="nucleotide sequence ID" value="NZ_CP149495.1"/>
</dbReference>
<dbReference type="PDB" id="6ZHF">
    <property type="method" value="X-ray"/>
    <property type="resolution" value="4.00 A"/>
    <property type="chains" value="A=2-880"/>
</dbReference>
<dbReference type="PDB" id="6ZHG">
    <property type="method" value="X-ray"/>
    <property type="resolution" value="4.00 A"/>
    <property type="chains" value="A=2-880"/>
</dbReference>
<dbReference type="PDB" id="6ZHH">
    <property type="method" value="X-ray"/>
    <property type="resolution" value="3.00 A"/>
    <property type="chains" value="A/B/C/D/E/F/G/H=2-880"/>
</dbReference>
<dbReference type="PDB" id="9EUQ">
    <property type="method" value="EM"/>
    <property type="resolution" value="2.98 A"/>
    <property type="chains" value="A=2-880"/>
</dbReference>
<dbReference type="PDB" id="9EVC">
    <property type="method" value="EM"/>
    <property type="resolution" value="3.73 A"/>
    <property type="chains" value="A=2-880"/>
</dbReference>
<dbReference type="PDB" id="9GQO">
    <property type="method" value="EM"/>
    <property type="resolution" value="3.46 A"/>
    <property type="chains" value="A=2-880"/>
</dbReference>
<dbReference type="PDBsum" id="6ZHF"/>
<dbReference type="PDBsum" id="6ZHG"/>
<dbReference type="PDBsum" id="6ZHH"/>
<dbReference type="PDBsum" id="9EUQ"/>
<dbReference type="PDBsum" id="9EVC"/>
<dbReference type="PDBsum" id="9GQO"/>
<dbReference type="EMDB" id="EMD-19980"/>
<dbReference type="EMDB" id="EMD-19998"/>
<dbReference type="SMR" id="Q8Y8Q5"/>
<dbReference type="STRING" id="169963.gene:17593492"/>
<dbReference type="PaxDb" id="169963-lmo0841"/>
<dbReference type="EnsemblBacteria" id="CAC98919">
    <property type="protein sequence ID" value="CAC98919"/>
    <property type="gene ID" value="CAC98919"/>
</dbReference>
<dbReference type="GeneID" id="985338"/>
<dbReference type="KEGG" id="lmo:lmo0841"/>
<dbReference type="PATRIC" id="fig|169963.11.peg.864"/>
<dbReference type="eggNOG" id="COG0474">
    <property type="taxonomic scope" value="Bacteria"/>
</dbReference>
<dbReference type="HOGENOM" id="CLU_002360_3_3_9"/>
<dbReference type="OrthoDB" id="9813266at2"/>
<dbReference type="PhylomeDB" id="Q8Y8Q5"/>
<dbReference type="BioCyc" id="LMON169963:LMO0841-MONOMER"/>
<dbReference type="Proteomes" id="UP000000817">
    <property type="component" value="Chromosome"/>
</dbReference>
<dbReference type="GO" id="GO:0016020">
    <property type="term" value="C:membrane"/>
    <property type="evidence" value="ECO:0000318"/>
    <property type="project" value="GO_Central"/>
</dbReference>
<dbReference type="GO" id="GO:0005886">
    <property type="term" value="C:plasma membrane"/>
    <property type="evidence" value="ECO:0007669"/>
    <property type="project" value="UniProtKB-SubCell"/>
</dbReference>
<dbReference type="GO" id="GO:0005524">
    <property type="term" value="F:ATP binding"/>
    <property type="evidence" value="ECO:0007669"/>
    <property type="project" value="UniProtKB-KW"/>
</dbReference>
<dbReference type="GO" id="GO:0016887">
    <property type="term" value="F:ATP hydrolysis activity"/>
    <property type="evidence" value="ECO:0007669"/>
    <property type="project" value="InterPro"/>
</dbReference>
<dbReference type="GO" id="GO:0046872">
    <property type="term" value="F:metal ion binding"/>
    <property type="evidence" value="ECO:0007669"/>
    <property type="project" value="UniProtKB-KW"/>
</dbReference>
<dbReference type="GO" id="GO:0005388">
    <property type="term" value="F:P-type calcium transporter activity"/>
    <property type="evidence" value="ECO:0007669"/>
    <property type="project" value="UniProtKB-EC"/>
</dbReference>
<dbReference type="GO" id="GO:0015662">
    <property type="term" value="F:P-type ion transporter activity"/>
    <property type="evidence" value="ECO:0000318"/>
    <property type="project" value="GO_Central"/>
</dbReference>
<dbReference type="GO" id="GO:0034220">
    <property type="term" value="P:monoatomic ion transmembrane transport"/>
    <property type="evidence" value="ECO:0000318"/>
    <property type="project" value="GO_Central"/>
</dbReference>
<dbReference type="CDD" id="cd02089">
    <property type="entry name" value="P-type_ATPase_Ca_prok"/>
    <property type="match status" value="1"/>
</dbReference>
<dbReference type="FunFam" id="2.70.150.10:FF:000016">
    <property type="entry name" value="Calcium-transporting P-type ATPase putative"/>
    <property type="match status" value="1"/>
</dbReference>
<dbReference type="FunFam" id="3.40.50.1000:FF:000028">
    <property type="entry name" value="Calcium-transporting P-type ATPase, putative"/>
    <property type="match status" value="1"/>
</dbReference>
<dbReference type="FunFam" id="3.40.1110.10:FF:000053">
    <property type="entry name" value="Cation-transporting ATPase, E1-E2 family"/>
    <property type="match status" value="1"/>
</dbReference>
<dbReference type="Gene3D" id="3.40.1110.10">
    <property type="entry name" value="Calcium-transporting ATPase, cytoplasmic domain N"/>
    <property type="match status" value="1"/>
</dbReference>
<dbReference type="Gene3D" id="2.70.150.10">
    <property type="entry name" value="Calcium-transporting ATPase, cytoplasmic transduction domain A"/>
    <property type="match status" value="1"/>
</dbReference>
<dbReference type="Gene3D" id="1.20.1110.10">
    <property type="entry name" value="Calcium-transporting ATPase, transmembrane domain"/>
    <property type="match status" value="1"/>
</dbReference>
<dbReference type="Gene3D" id="3.40.50.1000">
    <property type="entry name" value="HAD superfamily/HAD-like"/>
    <property type="match status" value="1"/>
</dbReference>
<dbReference type="InterPro" id="IPR006068">
    <property type="entry name" value="ATPase_P-typ_cation-transptr_C"/>
</dbReference>
<dbReference type="InterPro" id="IPR004014">
    <property type="entry name" value="ATPase_P-typ_cation-transptr_N"/>
</dbReference>
<dbReference type="InterPro" id="IPR023299">
    <property type="entry name" value="ATPase_P-typ_cyto_dom_N"/>
</dbReference>
<dbReference type="InterPro" id="IPR018303">
    <property type="entry name" value="ATPase_P-typ_P_site"/>
</dbReference>
<dbReference type="InterPro" id="IPR023298">
    <property type="entry name" value="ATPase_P-typ_TM_dom_sf"/>
</dbReference>
<dbReference type="InterPro" id="IPR008250">
    <property type="entry name" value="ATPase_P-typ_transduc_dom_A_sf"/>
</dbReference>
<dbReference type="InterPro" id="IPR036412">
    <property type="entry name" value="HAD-like_sf"/>
</dbReference>
<dbReference type="InterPro" id="IPR023214">
    <property type="entry name" value="HAD_sf"/>
</dbReference>
<dbReference type="InterPro" id="IPR001757">
    <property type="entry name" value="P_typ_ATPase"/>
</dbReference>
<dbReference type="InterPro" id="IPR044492">
    <property type="entry name" value="P_typ_ATPase_HD_dom"/>
</dbReference>
<dbReference type="NCBIfam" id="TIGR01494">
    <property type="entry name" value="ATPase_P-type"/>
    <property type="match status" value="2"/>
</dbReference>
<dbReference type="PANTHER" id="PTHR42861">
    <property type="entry name" value="CALCIUM-TRANSPORTING ATPASE"/>
    <property type="match status" value="1"/>
</dbReference>
<dbReference type="Pfam" id="PF13246">
    <property type="entry name" value="Cation_ATPase"/>
    <property type="match status" value="1"/>
</dbReference>
<dbReference type="Pfam" id="PF00689">
    <property type="entry name" value="Cation_ATPase_C"/>
    <property type="match status" value="1"/>
</dbReference>
<dbReference type="Pfam" id="PF00690">
    <property type="entry name" value="Cation_ATPase_N"/>
    <property type="match status" value="1"/>
</dbReference>
<dbReference type="Pfam" id="PF00122">
    <property type="entry name" value="E1-E2_ATPase"/>
    <property type="match status" value="1"/>
</dbReference>
<dbReference type="Pfam" id="PF00702">
    <property type="entry name" value="Hydrolase"/>
    <property type="match status" value="1"/>
</dbReference>
<dbReference type="PRINTS" id="PR00119">
    <property type="entry name" value="CATATPASE"/>
</dbReference>
<dbReference type="PRINTS" id="PR00120">
    <property type="entry name" value="HATPASE"/>
</dbReference>
<dbReference type="SFLD" id="SFLDS00003">
    <property type="entry name" value="Haloacid_Dehalogenase"/>
    <property type="match status" value="1"/>
</dbReference>
<dbReference type="SFLD" id="SFLDF00027">
    <property type="entry name" value="p-type_atpase"/>
    <property type="match status" value="1"/>
</dbReference>
<dbReference type="SMART" id="SM00831">
    <property type="entry name" value="Cation_ATPase_N"/>
    <property type="match status" value="1"/>
</dbReference>
<dbReference type="SUPFAM" id="SSF81653">
    <property type="entry name" value="Calcium ATPase, transduction domain A"/>
    <property type="match status" value="1"/>
</dbReference>
<dbReference type="SUPFAM" id="SSF81665">
    <property type="entry name" value="Calcium ATPase, transmembrane domain M"/>
    <property type="match status" value="1"/>
</dbReference>
<dbReference type="SUPFAM" id="SSF56784">
    <property type="entry name" value="HAD-like"/>
    <property type="match status" value="1"/>
</dbReference>
<dbReference type="SUPFAM" id="SSF81660">
    <property type="entry name" value="Metal cation-transporting ATPase, ATP-binding domain N"/>
    <property type="match status" value="1"/>
</dbReference>
<dbReference type="PROSITE" id="PS00154">
    <property type="entry name" value="ATPASE_E1_E2"/>
    <property type="match status" value="1"/>
</dbReference>
<sequence length="880" mass="95658">MEIYRKSAAETFTQLEATEKGLTTSEVTKRQEKYGFNELKNKKKDPLWKLFLETFKDPMVIVLVIAALVQLVLGEVVESLIIFLVLIVNSIISVVQTRKAESSLDALREMSAPVAKVIRDGSKQSIHARELVPGDVVILDAGDFVPADGRLFESGSLKIDEGMLTGESEAVEKYIDTIPDEVGLGDRVNMVFSGSLVVYGRGMFVVTGTASETEIGKIAGLLETAEAKQTPLQRKLESFSKKLGLGILALCVLIFAVEAGRVLLGDNSADMATAILNAFMFAVAVAVAAIPEALSSIVTIVLAVGTNKMAKQHAIIRKLPAVETLGSTSVICTDKTGTLTQNKMTVVDYYLPDGTKENFPESPENWSEGERRLIHIAVLCNDSNINSEGKELGDPTEVALIAFSNKNNQDYNEIREKFIREGEIPFDSDRKLMSTLHTFNENKAMLTKGGPDVMFARCSYVFLDGEEKPMTEEILAKLKETNEEFSNQALRVLAYGYKRMPADTTELKLEDEQDIVLVGLTAMIDPPREAVYASIEESKKAGIRTVMITGDHKTTAQAIGRDIGLMDADDIALTGQELDAMPEEELDKKLEHIAVYARVSPENKIRIVKAWQKKGKITAMTGDGVNDAPALKQADIGVAMGSGTDVAKDSAAMILTDDNFVSIVDAVGVGRTVFDNIKKSIAYLFAGNLGAIIAILFALVLDWINPFTALQLLFINLVNDSLPAIALGMEKAEPDVMKRKPRDINEGIFAGGTMRAVISRGVLIGIAVIISQYIGMQISPEMSVAMAFTTLILARTLQTFAARSNVQTAFGAGFFSNKYVIGAVLLCFVLYGITVLPGAREIFSIPASFGLHEWSIAAGLALAAVVMMEIIKVVQNKFFK</sequence>
<reference key="1">
    <citation type="journal article" date="2001" name="Science">
        <title>Comparative genomics of Listeria species.</title>
        <authorList>
            <person name="Glaser P."/>
            <person name="Frangeul L."/>
            <person name="Buchrieser C."/>
            <person name="Rusniok C."/>
            <person name="Amend A."/>
            <person name="Baquero F."/>
            <person name="Berche P."/>
            <person name="Bloecker H."/>
            <person name="Brandt P."/>
            <person name="Chakraborty T."/>
            <person name="Charbit A."/>
            <person name="Chetouani F."/>
            <person name="Couve E."/>
            <person name="de Daruvar A."/>
            <person name="Dehoux P."/>
            <person name="Domann E."/>
            <person name="Dominguez-Bernal G."/>
            <person name="Duchaud E."/>
            <person name="Durant L."/>
            <person name="Dussurget O."/>
            <person name="Entian K.-D."/>
            <person name="Fsihi H."/>
            <person name="Garcia-del Portillo F."/>
            <person name="Garrido P."/>
            <person name="Gautier L."/>
            <person name="Goebel W."/>
            <person name="Gomez-Lopez N."/>
            <person name="Hain T."/>
            <person name="Hauf J."/>
            <person name="Jackson D."/>
            <person name="Jones L.-M."/>
            <person name="Kaerst U."/>
            <person name="Kreft J."/>
            <person name="Kuhn M."/>
            <person name="Kunst F."/>
            <person name="Kurapkat G."/>
            <person name="Madueno E."/>
            <person name="Maitournam A."/>
            <person name="Mata Vicente J."/>
            <person name="Ng E."/>
            <person name="Nedjari H."/>
            <person name="Nordsiek G."/>
            <person name="Novella S."/>
            <person name="de Pablos B."/>
            <person name="Perez-Diaz J.-C."/>
            <person name="Purcell R."/>
            <person name="Remmel B."/>
            <person name="Rose M."/>
            <person name="Schlueter T."/>
            <person name="Simoes N."/>
            <person name="Tierrez A."/>
            <person name="Vazquez-Boland J.-A."/>
            <person name="Voss H."/>
            <person name="Wehland J."/>
            <person name="Cossart P."/>
        </authorList>
    </citation>
    <scope>NUCLEOTIDE SEQUENCE [LARGE SCALE GENOMIC DNA]</scope>
    <source>
        <strain>ATCC BAA-679 / EGD-e</strain>
    </source>
</reference>
<reference key="2">
    <citation type="journal article" date="2011" name="J. Biol. Chem.">
        <title>Characterization of a Listeria monocytogenes Ca2+ Pump: a SERCA-type ATPase with only one Ca2+-binding site.</title>
        <authorList>
            <person name="Faxen K."/>
            <person name="Andersen J.L."/>
            <person name="Gourdon P."/>
            <person name="Fedosova N."/>
            <person name="Morth J.P."/>
            <person name="Nissen P."/>
            <person name="Moller J.V."/>
        </authorList>
    </citation>
    <scope>FUNCTION</scope>
    <scope>STOICHIOMETRY</scope>
    <scope>CATALYTIC ACTIVITY</scope>
    <scope>ACTIVITY REGULATION</scope>
    <scope>BIOPHYSICOCHEMICAL PROPERTIES</scope>
    <scope>SUBCELLULAR LOCATION</scope>
    <scope>MUTAGENESIS OF ALA-691 AND ARG-795</scope>
</reference>
<reference key="3">
    <citation type="journal article" date="2013" name="FEBS J.">
        <title>Probing determinants of cyclopiazonic acid sensitivity of bacterial Ca2+-ATPases.</title>
        <authorList>
            <person name="Kotsubei A."/>
            <person name="Gorgel M."/>
            <person name="Morth J.P."/>
            <person name="Nissen P."/>
            <person name="Andersen J.L."/>
        </authorList>
    </citation>
    <scope>ACTIVITY REGULATION</scope>
    <scope>MUTAGENESIS OF THR-54; MET-59; SER-240 AND SER-295</scope>
</reference>
<reference key="4">
    <citation type="journal article" date="2011" name="Acta Crystallogr. F">
        <title>Crystallization and preliminary structural analysis of the Listeria monocytogenes Ca(2+)-ATPase LMCA1.</title>
        <authorList>
            <person name="Andersen J.L."/>
            <person name="Gourdon P."/>
            <person name="Moller J.V."/>
            <person name="Morth J.P."/>
            <person name="Nissen P."/>
        </authorList>
    </citation>
    <scope>CRYSTALLIZATION</scope>
    <scope>SUBCELLULAR LOCATION</scope>
</reference>
<protein>
    <recommendedName>
        <fullName>Calcium-transporting ATPase lmo0841</fullName>
        <ecNumber>7.2.2.10</ecNumber>
    </recommendedName>
    <alternativeName>
        <fullName>LMCA1</fullName>
    </alternativeName>
</protein>
<gene>
    <name type="ordered locus">lmo0841</name>
</gene>
<feature type="chain" id="PRO_0000403478" description="Calcium-transporting ATPase lmo0841">
    <location>
        <begin position="1"/>
        <end position="880"/>
    </location>
</feature>
<feature type="transmembrane region" description="Helical" evidence="2">
    <location>
        <begin position="47"/>
        <end position="67"/>
    </location>
</feature>
<feature type="transmembrane region" description="Helical" evidence="2">
    <location>
        <begin position="68"/>
        <end position="88"/>
    </location>
</feature>
<feature type="transmembrane region" description="Helical" evidence="2">
    <location>
        <begin position="243"/>
        <end position="263"/>
    </location>
</feature>
<feature type="transmembrane region" description="Helical" evidence="2">
    <location>
        <begin position="271"/>
        <end position="291"/>
    </location>
</feature>
<feature type="transmembrane region" description="Helical" evidence="2">
    <location>
        <begin position="681"/>
        <end position="701"/>
    </location>
</feature>
<feature type="transmembrane region" description="Helical" evidence="2">
    <location>
        <begin position="707"/>
        <end position="727"/>
    </location>
</feature>
<feature type="transmembrane region" description="Helical" evidence="2">
    <location>
        <begin position="756"/>
        <end position="776"/>
    </location>
</feature>
<feature type="transmembrane region" description="Helical" evidence="2">
    <location>
        <begin position="819"/>
        <end position="839"/>
    </location>
</feature>
<feature type="transmembrane region" description="Helical" evidence="2">
    <location>
        <begin position="854"/>
        <end position="874"/>
    </location>
</feature>
<feature type="active site" description="4-aspartylphosphate intermediate" evidence="1">
    <location>
        <position position="334"/>
    </location>
</feature>
<feature type="binding site" evidence="1">
    <location>
        <position position="287"/>
    </location>
    <ligand>
        <name>Ca(2+)</name>
        <dbReference type="ChEBI" id="CHEBI:29108"/>
    </ligand>
</feature>
<feature type="binding site" evidence="1">
    <location>
        <position position="288"/>
    </location>
    <ligand>
        <name>Ca(2+)</name>
        <dbReference type="ChEBI" id="CHEBI:29108"/>
    </ligand>
</feature>
<feature type="binding site" evidence="1">
    <location>
        <position position="290"/>
    </location>
    <ligand>
        <name>Ca(2+)</name>
        <dbReference type="ChEBI" id="CHEBI:29108"/>
    </ligand>
</feature>
<feature type="binding site" evidence="1">
    <location>
        <position position="292"/>
    </location>
    <ligand>
        <name>Ca(2+)</name>
        <dbReference type="ChEBI" id="CHEBI:29108"/>
    </ligand>
</feature>
<feature type="binding site" evidence="1">
    <location>
        <position position="716"/>
    </location>
    <ligand>
        <name>Ca(2+)</name>
        <dbReference type="ChEBI" id="CHEBI:29108"/>
    </ligand>
</feature>
<feature type="binding site" evidence="1">
    <location>
        <position position="720"/>
    </location>
    <ligand>
        <name>Ca(2+)</name>
        <dbReference type="ChEBI" id="CHEBI:29108"/>
    </ligand>
</feature>
<feature type="mutagenesis site" description="Increases sensitivity to CPA. CPA-sensitive; when associated with P-295." evidence="5">
    <original>T</original>
    <variation>Q</variation>
    <location>
        <position position="54"/>
    </location>
</feature>
<feature type="mutagenesis site" description="Does not affect sensitivity to CPA." evidence="5">
    <original>M</original>
    <variation>L</variation>
    <location>
        <position position="59"/>
    </location>
</feature>
<feature type="mutagenesis site" description="Does not affect sensitivity to CPA." evidence="5">
    <original>S</original>
    <variation>G</variation>
    <location>
        <position position="240"/>
    </location>
</feature>
<feature type="mutagenesis site" description="Strongly increases sensitivity to CPA. CPA-sensitive; when associated with Q-54." evidence="5">
    <original>S</original>
    <variation>P</variation>
    <location>
        <position position="295"/>
    </location>
</feature>
<feature type="mutagenesis site" description="Displays optimal activity near pH 8.0." evidence="3">
    <original>A</original>
    <variation>E</variation>
    <location>
        <position position="691"/>
    </location>
</feature>
<feature type="mutagenesis site" description="Displays optimal activity near pH 8.0." evidence="3">
    <original>R</original>
    <variation>E</variation>
    <location>
        <position position="795"/>
    </location>
</feature>
<feature type="mutagenesis site" description="Shows very low activity, but no change in pH-dependence." evidence="3">
    <original>R</original>
    <variation>K</variation>
    <location>
        <position position="795"/>
    </location>
</feature>
<feature type="mutagenesis site" description="Displays optimal activity near pH 8.5." evidence="3">
    <original>R</original>
    <variation>Q</variation>
    <location>
        <position position="795"/>
    </location>
</feature>
<feature type="helix" evidence="7">
    <location>
        <begin position="8"/>
        <end position="15"/>
    </location>
</feature>
<feature type="helix" evidence="7">
    <location>
        <begin position="24"/>
        <end position="34"/>
    </location>
</feature>
<feature type="helix" evidence="7">
    <location>
        <begin position="48"/>
        <end position="51"/>
    </location>
</feature>
<feature type="helix" evidence="7">
    <location>
        <begin position="53"/>
        <end position="56"/>
    </location>
</feature>
<feature type="helix" evidence="7">
    <location>
        <begin position="58"/>
        <end position="73"/>
    </location>
</feature>
<feature type="helix" evidence="7">
    <location>
        <begin position="76"/>
        <end position="99"/>
    </location>
</feature>
<feature type="helix" evidence="7">
    <location>
        <begin position="100"/>
        <end position="103"/>
    </location>
</feature>
<feature type="strand" evidence="7">
    <location>
        <begin position="113"/>
        <end position="119"/>
    </location>
</feature>
<feature type="strand" evidence="7">
    <location>
        <begin position="122"/>
        <end position="127"/>
    </location>
</feature>
<feature type="helix" evidence="7">
    <location>
        <begin position="128"/>
        <end position="130"/>
    </location>
</feature>
<feature type="strand" evidence="7">
    <location>
        <begin position="136"/>
        <end position="139"/>
    </location>
</feature>
<feature type="strand" evidence="7">
    <location>
        <begin position="147"/>
        <end position="160"/>
    </location>
</feature>
<feature type="helix" evidence="7">
    <location>
        <begin position="162"/>
        <end position="165"/>
    </location>
</feature>
<feature type="strand" evidence="7">
    <location>
        <begin position="169"/>
        <end position="172"/>
    </location>
</feature>
<feature type="helix" evidence="7">
    <location>
        <begin position="184"/>
        <end position="186"/>
    </location>
</feature>
<feature type="strand" evidence="7">
    <location>
        <begin position="196"/>
        <end position="208"/>
    </location>
</feature>
<feature type="helix" evidence="7">
    <location>
        <begin position="214"/>
        <end position="224"/>
    </location>
</feature>
<feature type="helix" evidence="7">
    <location>
        <begin position="231"/>
        <end position="263"/>
    </location>
</feature>
<feature type="strand" evidence="7">
    <location>
        <begin position="267"/>
        <end position="269"/>
    </location>
</feature>
<feature type="helix" evidence="7">
    <location>
        <begin position="271"/>
        <end position="289"/>
    </location>
</feature>
<feature type="helix" evidence="7">
    <location>
        <begin position="294"/>
        <end position="311"/>
    </location>
</feature>
<feature type="strand" evidence="7">
    <location>
        <begin position="314"/>
        <end position="318"/>
    </location>
</feature>
<feature type="helix" evidence="7">
    <location>
        <begin position="320"/>
        <end position="326"/>
    </location>
</feature>
<feature type="strand" evidence="7">
    <location>
        <begin position="330"/>
        <end position="333"/>
    </location>
</feature>
<feature type="helix" evidence="7">
    <location>
        <begin position="335"/>
        <end position="339"/>
    </location>
</feature>
<feature type="strand" evidence="7">
    <location>
        <begin position="345"/>
        <end position="350"/>
    </location>
</feature>
<feature type="helix" evidence="7">
    <location>
        <begin position="368"/>
        <end position="379"/>
    </location>
</feature>
<feature type="strand" evidence="7">
    <location>
        <begin position="391"/>
        <end position="393"/>
    </location>
</feature>
<feature type="helix" evidence="7">
    <location>
        <begin position="395"/>
        <end position="406"/>
    </location>
</feature>
<feature type="helix" evidence="7">
    <location>
        <begin position="411"/>
        <end position="417"/>
    </location>
</feature>
<feature type="strand" evidence="7">
    <location>
        <begin position="422"/>
        <end position="424"/>
    </location>
</feature>
<feature type="strand" evidence="7">
    <location>
        <begin position="428"/>
        <end position="430"/>
    </location>
</feature>
<feature type="strand" evidence="7">
    <location>
        <begin position="433"/>
        <end position="439"/>
    </location>
</feature>
<feature type="strand" evidence="7">
    <location>
        <begin position="442"/>
        <end position="449"/>
    </location>
</feature>
<feature type="helix" evidence="7">
    <location>
        <begin position="451"/>
        <end position="455"/>
    </location>
</feature>
<feature type="strand" evidence="7">
    <location>
        <begin position="458"/>
        <end position="467"/>
    </location>
</feature>
<feature type="turn" evidence="7">
    <location>
        <begin position="471"/>
        <end position="474"/>
    </location>
</feature>
<feature type="helix" evidence="7">
    <location>
        <begin position="475"/>
        <end position="487"/>
    </location>
</feature>
<feature type="strand" evidence="7">
    <location>
        <begin position="491"/>
        <end position="499"/>
    </location>
</feature>
<feature type="helix" evidence="7">
    <location>
        <begin position="509"/>
        <end position="511"/>
    </location>
</feature>
<feature type="strand" evidence="7">
    <location>
        <begin position="513"/>
        <end position="524"/>
    </location>
</feature>
<feature type="helix" evidence="7">
    <location>
        <begin position="531"/>
        <end position="540"/>
    </location>
</feature>
<feature type="strand" evidence="7">
    <location>
        <begin position="544"/>
        <end position="548"/>
    </location>
</feature>
<feature type="helix" evidence="7">
    <location>
        <begin position="553"/>
        <end position="561"/>
    </location>
</feature>
<feature type="turn" evidence="7">
    <location>
        <begin position="562"/>
        <end position="564"/>
    </location>
</feature>
<feature type="helix" evidence="7">
    <location>
        <begin position="575"/>
        <end position="579"/>
    </location>
</feature>
<feature type="helix" evidence="7">
    <location>
        <begin position="583"/>
        <end position="589"/>
    </location>
</feature>
<feature type="helix" evidence="7">
    <location>
        <begin position="590"/>
        <end position="592"/>
    </location>
</feature>
<feature type="strand" evidence="7">
    <location>
        <begin position="595"/>
        <end position="598"/>
    </location>
</feature>
<feature type="helix" evidence="7">
    <location>
        <begin position="601"/>
        <end position="613"/>
    </location>
</feature>
<feature type="strand" evidence="7">
    <location>
        <begin position="618"/>
        <end position="622"/>
    </location>
</feature>
<feature type="helix" evidence="7">
    <location>
        <begin position="625"/>
        <end position="627"/>
    </location>
</feature>
<feature type="helix" evidence="7">
    <location>
        <begin position="628"/>
        <end position="633"/>
    </location>
</feature>
<feature type="strand" evidence="7">
    <location>
        <begin position="634"/>
        <end position="640"/>
    </location>
</feature>
<feature type="helix" evidence="7">
    <location>
        <begin position="645"/>
        <end position="650"/>
    </location>
</feature>
<feature type="strand" evidence="7">
    <location>
        <begin position="652"/>
        <end position="655"/>
    </location>
</feature>
<feature type="helix" evidence="7">
    <location>
        <begin position="662"/>
        <end position="700"/>
    </location>
</feature>
<feature type="helix" evidence="7">
    <location>
        <begin position="709"/>
        <end position="717"/>
    </location>
</feature>
<feature type="turn" evidence="7">
    <location>
        <begin position="718"/>
        <end position="720"/>
    </location>
</feature>
<feature type="helix" evidence="7">
    <location>
        <begin position="721"/>
        <end position="728"/>
    </location>
</feature>
<feature type="turn" evidence="7">
    <location>
        <begin position="734"/>
        <end position="737"/>
    </location>
</feature>
<feature type="turn" evidence="7">
    <location>
        <begin position="748"/>
        <end position="752"/>
    </location>
</feature>
<feature type="helix" evidence="7">
    <location>
        <begin position="753"/>
        <end position="776"/>
    </location>
</feature>
<feature type="helix" evidence="7">
    <location>
        <begin position="780"/>
        <end position="802"/>
    </location>
</feature>
<feature type="strand" evidence="7">
    <location>
        <begin position="805"/>
        <end position="807"/>
    </location>
</feature>
<feature type="helix" evidence="7">
    <location>
        <begin position="809"/>
        <end position="812"/>
    </location>
</feature>
<feature type="turn" evidence="7">
    <location>
        <begin position="814"/>
        <end position="816"/>
    </location>
</feature>
<feature type="helix" evidence="7">
    <location>
        <begin position="818"/>
        <end position="834"/>
    </location>
</feature>
<feature type="turn" evidence="7">
    <location>
        <begin position="837"/>
        <end position="844"/>
    </location>
</feature>
<feature type="helix" evidence="7">
    <location>
        <begin position="851"/>
        <end position="878"/>
    </location>
</feature>
<proteinExistence type="evidence at protein level"/>